<reference key="1">
    <citation type="journal article" date="1998" name="Genomics">
        <title>Cloning, expression analysis, and chromosomal localization of BH-protocadherin (PCDH7), a novel member of the cadherin superfamily.</title>
        <authorList>
            <person name="Yoshida K."/>
            <person name="Yoshitomo-Nakagawa K."/>
            <person name="Seki N."/>
            <person name="Sasaki M."/>
            <person name="Sugano S."/>
        </authorList>
    </citation>
    <scope>NUCLEOTIDE SEQUENCE [MRNA] (ISOFORMS A AND B)</scope>
</reference>
<reference key="2">
    <citation type="journal article" date="2005" name="Nature">
        <title>Generation and annotation of the DNA sequences of human chromosomes 2 and 4.</title>
        <authorList>
            <person name="Hillier L.W."/>
            <person name="Graves T.A."/>
            <person name="Fulton R.S."/>
            <person name="Fulton L.A."/>
            <person name="Pepin K.H."/>
            <person name="Minx P."/>
            <person name="Wagner-McPherson C."/>
            <person name="Layman D."/>
            <person name="Wylie K."/>
            <person name="Sekhon M."/>
            <person name="Becker M.C."/>
            <person name="Fewell G.A."/>
            <person name="Delehaunty K.D."/>
            <person name="Miner T.L."/>
            <person name="Nash W.E."/>
            <person name="Kremitzki C."/>
            <person name="Oddy L."/>
            <person name="Du H."/>
            <person name="Sun H."/>
            <person name="Bradshaw-Cordum H."/>
            <person name="Ali J."/>
            <person name="Carter J."/>
            <person name="Cordes M."/>
            <person name="Harris A."/>
            <person name="Isak A."/>
            <person name="van Brunt A."/>
            <person name="Nguyen C."/>
            <person name="Du F."/>
            <person name="Courtney L."/>
            <person name="Kalicki J."/>
            <person name="Ozersky P."/>
            <person name="Abbott S."/>
            <person name="Armstrong J."/>
            <person name="Belter E.A."/>
            <person name="Caruso L."/>
            <person name="Cedroni M."/>
            <person name="Cotton M."/>
            <person name="Davidson T."/>
            <person name="Desai A."/>
            <person name="Elliott G."/>
            <person name="Erb T."/>
            <person name="Fronick C."/>
            <person name="Gaige T."/>
            <person name="Haakenson W."/>
            <person name="Haglund K."/>
            <person name="Holmes A."/>
            <person name="Harkins R."/>
            <person name="Kim K."/>
            <person name="Kruchowski S.S."/>
            <person name="Strong C.M."/>
            <person name="Grewal N."/>
            <person name="Goyea E."/>
            <person name="Hou S."/>
            <person name="Levy A."/>
            <person name="Martinka S."/>
            <person name="Mead K."/>
            <person name="McLellan M.D."/>
            <person name="Meyer R."/>
            <person name="Randall-Maher J."/>
            <person name="Tomlinson C."/>
            <person name="Dauphin-Kohlberg S."/>
            <person name="Kozlowicz-Reilly A."/>
            <person name="Shah N."/>
            <person name="Swearengen-Shahid S."/>
            <person name="Snider J."/>
            <person name="Strong J.T."/>
            <person name="Thompson J."/>
            <person name="Yoakum M."/>
            <person name="Leonard S."/>
            <person name="Pearman C."/>
            <person name="Trani L."/>
            <person name="Radionenko M."/>
            <person name="Waligorski J.E."/>
            <person name="Wang C."/>
            <person name="Rock S.M."/>
            <person name="Tin-Wollam A.-M."/>
            <person name="Maupin R."/>
            <person name="Latreille P."/>
            <person name="Wendl M.C."/>
            <person name="Yang S.-P."/>
            <person name="Pohl C."/>
            <person name="Wallis J.W."/>
            <person name="Spieth J."/>
            <person name="Bieri T.A."/>
            <person name="Berkowicz N."/>
            <person name="Nelson J.O."/>
            <person name="Osborne J."/>
            <person name="Ding L."/>
            <person name="Meyer R."/>
            <person name="Sabo A."/>
            <person name="Shotland Y."/>
            <person name="Sinha P."/>
            <person name="Wohldmann P.E."/>
            <person name="Cook L.L."/>
            <person name="Hickenbotham M.T."/>
            <person name="Eldred J."/>
            <person name="Williams D."/>
            <person name="Jones T.A."/>
            <person name="She X."/>
            <person name="Ciccarelli F.D."/>
            <person name="Izaurralde E."/>
            <person name="Taylor J."/>
            <person name="Schmutz J."/>
            <person name="Myers R.M."/>
            <person name="Cox D.R."/>
            <person name="Huang X."/>
            <person name="McPherson J.D."/>
            <person name="Mardis E.R."/>
            <person name="Clifton S.W."/>
            <person name="Warren W.C."/>
            <person name="Chinwalla A.T."/>
            <person name="Eddy S.R."/>
            <person name="Marra M.A."/>
            <person name="Ovcharenko I."/>
            <person name="Furey T.S."/>
            <person name="Miller W."/>
            <person name="Eichler E.E."/>
            <person name="Bork P."/>
            <person name="Suyama M."/>
            <person name="Torrents D."/>
            <person name="Waterston R.H."/>
            <person name="Wilson R.K."/>
        </authorList>
    </citation>
    <scope>NUCLEOTIDE SEQUENCE [LARGE SCALE GENOMIC DNA]</scope>
</reference>
<reference key="3">
    <citation type="journal article" date="2008" name="Proc. Natl. Acad. Sci. U.S.A.">
        <title>A quantitative atlas of mitotic phosphorylation.</title>
        <authorList>
            <person name="Dephoure N."/>
            <person name="Zhou C."/>
            <person name="Villen J."/>
            <person name="Beausoleil S.A."/>
            <person name="Bakalarski C.E."/>
            <person name="Elledge S.J."/>
            <person name="Gygi S.P."/>
        </authorList>
    </citation>
    <scope>PHOSPHORYLATION [LARGE SCALE ANALYSIS] AT SER-989 AND SER-1011</scope>
    <scope>IDENTIFICATION BY MASS SPECTROMETRY [LARGE SCALE ANALYSIS]</scope>
    <source>
        <tissue>Cervix carcinoma</tissue>
    </source>
</reference>
<reference key="4">
    <citation type="journal article" date="2009" name="Anal. Chem.">
        <title>Lys-N and trypsin cover complementary parts of the phosphoproteome in a refined SCX-based approach.</title>
        <authorList>
            <person name="Gauci S."/>
            <person name="Helbig A.O."/>
            <person name="Slijper M."/>
            <person name="Krijgsveld J."/>
            <person name="Heck A.J."/>
            <person name="Mohammed S."/>
        </authorList>
    </citation>
    <scope>IDENTIFICATION BY MASS SPECTROMETRY [LARGE SCALE ANALYSIS]</scope>
</reference>
<reference key="5">
    <citation type="journal article" date="2010" name="Sci. Signal.">
        <title>Quantitative phosphoproteomics reveals widespread full phosphorylation site occupancy during mitosis.</title>
        <authorList>
            <person name="Olsen J.V."/>
            <person name="Vermeulen M."/>
            <person name="Santamaria A."/>
            <person name="Kumar C."/>
            <person name="Miller M.L."/>
            <person name="Jensen L.J."/>
            <person name="Gnad F."/>
            <person name="Cox J."/>
            <person name="Jensen T.S."/>
            <person name="Nigg E.A."/>
            <person name="Brunak S."/>
            <person name="Mann M."/>
        </authorList>
    </citation>
    <scope>PHOSPHORYLATION [LARGE SCALE ANALYSIS] AT SER-989</scope>
    <scope>IDENTIFICATION BY MASS SPECTROMETRY [LARGE SCALE ANALYSIS]</scope>
    <source>
        <tissue>Cervix carcinoma</tissue>
    </source>
</reference>
<reference key="6">
    <citation type="journal article" date="2013" name="J. Proteome Res.">
        <title>Toward a comprehensive characterization of a human cancer cell phosphoproteome.</title>
        <authorList>
            <person name="Zhou H."/>
            <person name="Di Palma S."/>
            <person name="Preisinger C."/>
            <person name="Peng M."/>
            <person name="Polat A.N."/>
            <person name="Heck A.J."/>
            <person name="Mohammed S."/>
        </authorList>
    </citation>
    <scope>PHOSPHORYLATION [LARGE SCALE ANALYSIS] AT SER-989</scope>
    <scope>IDENTIFICATION BY MASS SPECTROMETRY [LARGE SCALE ANALYSIS]</scope>
    <source>
        <tissue>Cervix carcinoma</tissue>
    </source>
</reference>
<reference key="7">
    <citation type="submission" date="2007-10" db="PDB data bank">
        <title>Solution structure of the third cadherin domain from human protocadherin 7.</title>
        <authorList>
            <consortium name="RIKEN structural genomics initiative (RSGI)"/>
        </authorList>
    </citation>
    <scope>STRUCTURE BY NMR OF 302-413</scope>
</reference>
<sequence>MLRMRTAGWARGWCLGCCLLLPLSLSLAAAKQLLRYRLAEEGPADVRIGNVASDLGIVTGSGEVTFSLESGSEYLKIDNLTGELSTSERRIDREKLPQCQMIFDENECFLDFEVSVIGPSQSWVDLFEGQVIVLDINDNTPTFPSPVLTLTVEENRPVGTLYLLPTATDRDFGRNGIERYELLQEPGGGGSGGESRRAGAADSAPYPGGGGNGASGGGSGGSKRRLDASEGGGGTNPGGRSSVFELQVADTPDGEKQPQLIVKGALDREQRDSYELTLRVRDGGDPPRSSQAILRVLITDVNDNSPRFEKSVYEADLAENSAPGTPILQLRAADLDVGVNGQIEYVFGAATESVRRLLRLDETSGWLSVLHRIDREEVNQLRFTVMARDRGQPPKTDKATVVLNIKDENDNVPSIEIRKIGRIPLKDGVANVAEDVLVDTPIALVQVSDRDQGENGVVTCTVVGDVPFQLKPASDTEGDQNKKKYFLHTSTPLDYEATREFNVVIVAVDSGSPSLSSNNSLIVKVGDTNDNPPMFGQSVVEVYFPENNIPGERVATVLATDADSGKNAEIAYSLDSSVMGIFAIDPDSGDILVNTVLDREQTDRYEFKVNAKDKGIPVLQGSTTVIVQVADKNDNDPKFMQDVFTFYVKENLQPNSPVGMVTVMDADKGRNAEMSLYIEENNNIFSIENDTGTIYSTMSFDREHQTTYTFRVKAVDGGDPPRSATATVSLFVMDENDNAPTVTLPKNISYTLLPPSSNVRTVVATVLATDSDDGINADLNYSIVGGNPFKLFEIDPTSGVVSLVGKLTQKHYGLHRLVVQVNDSGQPSQSTTTLVHVFVNESVSNATAIDSQIARSLHIPLTQDIAGDPSYEISKQRLSIVIGVVAGIMTVILIILIVVMARYCRSKNKNGYEAGKKDHEDFFTPQQHDKSKKPKKDKKNKKSKQPLYSSIVTVEASKPNGQRYDSVNEKLSDSPSMGRYRSVNGGPGSPDLARHYKSSSPLPTVQLHPQSPTAGKKHQAVQDLPPANTFVGAGDNISIGSDHCSEYSCQTNNKYSKQMRLHPYITVFG</sequence>
<evidence type="ECO:0000255" key="1"/>
<evidence type="ECO:0000255" key="2">
    <source>
        <dbReference type="PROSITE-ProRule" id="PRU00043"/>
    </source>
</evidence>
<evidence type="ECO:0000256" key="3">
    <source>
        <dbReference type="SAM" id="MobiDB-lite"/>
    </source>
</evidence>
<evidence type="ECO:0000303" key="4">
    <source>
    </source>
</evidence>
<evidence type="ECO:0000305" key="5"/>
<evidence type="ECO:0007744" key="6">
    <source>
    </source>
</evidence>
<evidence type="ECO:0007744" key="7">
    <source>
    </source>
</evidence>
<evidence type="ECO:0007744" key="8">
    <source>
    </source>
</evidence>
<evidence type="ECO:0007829" key="9">
    <source>
        <dbReference type="PDB" id="2YST"/>
    </source>
</evidence>
<feature type="signal peptide" evidence="1">
    <location>
        <begin position="1"/>
        <end position="28"/>
    </location>
</feature>
<feature type="chain" id="PRO_0000003992" description="Protocadherin-7">
    <location>
        <begin position="29"/>
        <end position="1069"/>
    </location>
</feature>
<feature type="topological domain" description="Extracellular" evidence="1">
    <location>
        <begin position="29"/>
        <end position="879"/>
    </location>
</feature>
<feature type="transmembrane region" description="Helical" evidence="1">
    <location>
        <begin position="880"/>
        <end position="900"/>
    </location>
</feature>
<feature type="topological domain" description="Cytoplasmic" evidence="1">
    <location>
        <begin position="901"/>
        <end position="1069"/>
    </location>
</feature>
<feature type="domain" description="Cadherin 1" evidence="2">
    <location>
        <begin position="29"/>
        <end position="143"/>
    </location>
</feature>
<feature type="domain" description="Cadherin 2" evidence="2">
    <location>
        <begin position="144"/>
        <end position="308"/>
    </location>
</feature>
<feature type="domain" description="Cadherin 3" evidence="2">
    <location>
        <begin position="309"/>
        <end position="415"/>
    </location>
</feature>
<feature type="domain" description="Cadherin 4" evidence="2">
    <location>
        <begin position="424"/>
        <end position="535"/>
    </location>
</feature>
<feature type="domain" description="Cadherin 5" evidence="2">
    <location>
        <begin position="536"/>
        <end position="639"/>
    </location>
</feature>
<feature type="domain" description="Cadherin 6" evidence="2">
    <location>
        <begin position="640"/>
        <end position="742"/>
    </location>
</feature>
<feature type="domain" description="Cadherin 7" evidence="2">
    <location>
        <begin position="745"/>
        <end position="862"/>
    </location>
</feature>
<feature type="region of interest" description="Disordered" evidence="3">
    <location>
        <begin position="182"/>
        <end position="242"/>
    </location>
</feature>
<feature type="region of interest" description="Disordered" evidence="3">
    <location>
        <begin position="910"/>
        <end position="988"/>
    </location>
</feature>
<feature type="compositionally biased region" description="Gly residues" evidence="3">
    <location>
        <begin position="207"/>
        <end position="221"/>
    </location>
</feature>
<feature type="compositionally biased region" description="Basic residues" evidence="3">
    <location>
        <begin position="930"/>
        <end position="944"/>
    </location>
</feature>
<feature type="modified residue" description="Phosphoserine" evidence="6 7 8">
    <location>
        <position position="989"/>
    </location>
</feature>
<feature type="modified residue" description="Phosphoserine" evidence="6">
    <location>
        <position position="1011"/>
    </location>
</feature>
<feature type="glycosylation site" description="N-linked (GlcNAc...) asparagine" evidence="1">
    <location>
        <position position="79"/>
    </location>
</feature>
<feature type="glycosylation site" description="N-linked (GlcNAc...) asparagine" evidence="1">
    <location>
        <position position="689"/>
    </location>
</feature>
<feature type="glycosylation site" description="N-linked (GlcNAc...) asparagine" evidence="1">
    <location>
        <position position="747"/>
    </location>
</feature>
<feature type="glycosylation site" description="N-linked (GlcNAc...) asparagine" evidence="1">
    <location>
        <position position="780"/>
    </location>
</feature>
<feature type="glycosylation site" description="N-linked (GlcNAc...) asparagine" evidence="1">
    <location>
        <position position="822"/>
    </location>
</feature>
<feature type="glycosylation site" description="N-linked (GlcNAc...) asparagine" evidence="1">
    <location>
        <position position="840"/>
    </location>
</feature>
<feature type="glycosylation site" description="N-linked (GlcNAc...) asparagine" evidence="1">
    <location>
        <position position="845"/>
    </location>
</feature>
<feature type="splice variant" id="VSP_000704" description="In isoform B." evidence="4">
    <original>MRLHPYITVFG</original>
    <variation>VRCIPNIFKYPREG</variation>
    <location>
        <begin position="1059"/>
        <end position="1069"/>
    </location>
</feature>
<feature type="sequence conflict" description="In Ref. 1; BAA25194/BAA25195/BAA25196." evidence="5" ref="1">
    <original>L</original>
    <variation>F</variation>
    <location>
        <position position="25"/>
    </location>
</feature>
<feature type="sequence conflict" description="In Ref. 1; BAA25194/BAA25195/BAA25196." evidence="5" ref="1">
    <original>N</original>
    <variation>K</variation>
    <location>
        <position position="518"/>
    </location>
</feature>
<feature type="sequence conflict" description="In Ref. 1; BAA25194/BAA25195/BAA25196." evidence="5" ref="1">
    <original>L</original>
    <variation>V</variation>
    <location>
        <position position="834"/>
    </location>
</feature>
<feature type="strand" evidence="9">
    <location>
        <begin position="309"/>
        <end position="318"/>
    </location>
</feature>
<feature type="strand" evidence="9">
    <location>
        <begin position="326"/>
        <end position="329"/>
    </location>
</feature>
<feature type="strand" evidence="9">
    <location>
        <begin position="335"/>
        <end position="338"/>
    </location>
</feature>
<feature type="helix" evidence="9">
    <location>
        <begin position="354"/>
        <end position="357"/>
    </location>
</feature>
<feature type="strand" evidence="9">
    <location>
        <begin position="358"/>
        <end position="360"/>
    </location>
</feature>
<feature type="turn" evidence="9">
    <location>
        <begin position="362"/>
        <end position="364"/>
    </location>
</feature>
<feature type="strand" evidence="9">
    <location>
        <begin position="366"/>
        <end position="369"/>
    </location>
</feature>
<feature type="turn" evidence="9">
    <location>
        <begin position="375"/>
        <end position="377"/>
    </location>
</feature>
<feature type="strand" evidence="9">
    <location>
        <begin position="379"/>
        <end position="387"/>
    </location>
</feature>
<feature type="turn" evidence="9">
    <location>
        <begin position="391"/>
        <end position="394"/>
    </location>
</feature>
<feature type="strand" evidence="9">
    <location>
        <begin position="397"/>
        <end position="406"/>
    </location>
</feature>
<name>PCDH7_HUMAN</name>
<accession>O60245</accession>
<accession>O60246</accession>
<accession>O60247</accession>
<accession>Q4W5C4</accession>
<comment type="subcellular location">
    <subcellularLocation>
        <location>Cell membrane</location>
        <topology>Single-pass type I membrane protein</topology>
    </subcellularLocation>
</comment>
<comment type="alternative products">
    <event type="alternative splicing"/>
    <isoform>
        <id>O60245-1</id>
        <name>A</name>
        <name>BH-Pcdh-a</name>
        <sequence type="displayed"/>
    </isoform>
    <isoform>
        <id>O60245-2</id>
        <name>B</name>
        <name>BH-Pcdh-b</name>
        <sequence type="described" ref="VSP_000704"/>
    </isoform>
</comment>
<comment type="tissue specificity">
    <text>Expressed predominantly in brain and heart and at lower levels in various other tissues.</text>
</comment>
<comment type="sequence caution" evidence="5">
    <conflict type="miscellaneous discrepancy">
        <sequence resource="EMBL-CDS" id="BAA25196"/>
    </conflict>
    <text>Aberrant splicing.</text>
</comment>
<organism>
    <name type="scientific">Homo sapiens</name>
    <name type="common">Human</name>
    <dbReference type="NCBI Taxonomy" id="9606"/>
    <lineage>
        <taxon>Eukaryota</taxon>
        <taxon>Metazoa</taxon>
        <taxon>Chordata</taxon>
        <taxon>Craniata</taxon>
        <taxon>Vertebrata</taxon>
        <taxon>Euteleostomi</taxon>
        <taxon>Mammalia</taxon>
        <taxon>Eutheria</taxon>
        <taxon>Euarchontoglires</taxon>
        <taxon>Primates</taxon>
        <taxon>Haplorrhini</taxon>
        <taxon>Catarrhini</taxon>
        <taxon>Hominidae</taxon>
        <taxon>Homo</taxon>
    </lineage>
</organism>
<proteinExistence type="evidence at protein level"/>
<gene>
    <name type="primary">PCDH7</name>
    <name type="synonym">BHPCDH</name>
</gene>
<dbReference type="EMBL" id="AB006755">
    <property type="protein sequence ID" value="BAA25194.1"/>
    <property type="molecule type" value="mRNA"/>
</dbReference>
<dbReference type="EMBL" id="AB006756">
    <property type="protein sequence ID" value="BAA25195.1"/>
    <property type="molecule type" value="mRNA"/>
</dbReference>
<dbReference type="EMBL" id="AB006757">
    <property type="protein sequence ID" value="BAA25196.1"/>
    <property type="status" value="ALT_SEQ"/>
    <property type="molecule type" value="mRNA"/>
</dbReference>
<dbReference type="EMBL" id="AC097716">
    <property type="status" value="NOT_ANNOTATED_CDS"/>
    <property type="molecule type" value="Genomic_DNA"/>
</dbReference>
<dbReference type="EMBL" id="AC098595">
    <property type="status" value="NOT_ANNOTATED_CDS"/>
    <property type="molecule type" value="Genomic_DNA"/>
</dbReference>
<dbReference type="EMBL" id="AC107394">
    <property type="status" value="NOT_ANNOTATED_CDS"/>
    <property type="molecule type" value="Genomic_DNA"/>
</dbReference>
<dbReference type="EMBL" id="AC110766">
    <property type="protein sequence ID" value="AAY40944.1"/>
    <property type="molecule type" value="Genomic_DNA"/>
</dbReference>
<dbReference type="EMBL" id="AC112239">
    <property type="status" value="NOT_ANNOTATED_CDS"/>
    <property type="molecule type" value="Genomic_DNA"/>
</dbReference>
<dbReference type="CCDS" id="CCDS33971.1">
    <molecule id="O60245-1"/>
</dbReference>
<dbReference type="PIR" id="T00041">
    <property type="entry name" value="T00041"/>
</dbReference>
<dbReference type="PIR" id="T00042">
    <property type="entry name" value="T00042"/>
</dbReference>
<dbReference type="RefSeq" id="NP_002580.2">
    <molecule id="O60245-1"/>
    <property type="nucleotide sequence ID" value="NM_002589.2"/>
</dbReference>
<dbReference type="RefSeq" id="NP_115832.1">
    <property type="nucleotide sequence ID" value="NM_032456.2"/>
</dbReference>
<dbReference type="PDB" id="2YST">
    <property type="method" value="NMR"/>
    <property type="chains" value="A=302-413"/>
</dbReference>
<dbReference type="PDBsum" id="2YST"/>
<dbReference type="SMR" id="O60245"/>
<dbReference type="BioGRID" id="111132">
    <property type="interactions" value="287"/>
</dbReference>
<dbReference type="FunCoup" id="O60245">
    <property type="interactions" value="1024"/>
</dbReference>
<dbReference type="IntAct" id="O60245">
    <property type="interactions" value="58"/>
</dbReference>
<dbReference type="MINT" id="O60245"/>
<dbReference type="STRING" id="9606.ENSP00000441802"/>
<dbReference type="GlyCosmos" id="O60245">
    <property type="glycosylation" value="7 sites, No reported glycans"/>
</dbReference>
<dbReference type="GlyGen" id="O60245">
    <property type="glycosylation" value="9 sites, 2 N-linked glycans (2 sites), 1 O-linked glycan (2 sites)"/>
</dbReference>
<dbReference type="iPTMnet" id="O60245"/>
<dbReference type="PhosphoSitePlus" id="O60245"/>
<dbReference type="SwissPalm" id="O60245"/>
<dbReference type="BioMuta" id="PCDH7"/>
<dbReference type="jPOST" id="O60245"/>
<dbReference type="MassIVE" id="O60245"/>
<dbReference type="PaxDb" id="9606-ENSP00000441802"/>
<dbReference type="PeptideAtlas" id="O60245"/>
<dbReference type="ProteomicsDB" id="49279">
    <molecule id="O60245-1"/>
</dbReference>
<dbReference type="ProteomicsDB" id="49280">
    <molecule id="O60245-2"/>
</dbReference>
<dbReference type="Pumba" id="O60245"/>
<dbReference type="Antibodypedia" id="2149">
    <property type="antibodies" value="369 antibodies from 26 providers"/>
</dbReference>
<dbReference type="DNASU" id="5099"/>
<dbReference type="Ensembl" id="ENST00000361762.3">
    <molecule id="O60245-1"/>
    <property type="protein sequence ID" value="ENSP00000355243.2"/>
    <property type="gene ID" value="ENSG00000169851.16"/>
</dbReference>
<dbReference type="GeneID" id="5099"/>
<dbReference type="KEGG" id="hsa:5099"/>
<dbReference type="UCSC" id="uc003gsk.2">
    <molecule id="O60245-1"/>
    <property type="organism name" value="human"/>
</dbReference>
<dbReference type="AGR" id="HGNC:8659"/>
<dbReference type="CTD" id="5099"/>
<dbReference type="DisGeNET" id="5099"/>
<dbReference type="GeneCards" id="PCDH7"/>
<dbReference type="HGNC" id="HGNC:8659">
    <property type="gene designation" value="PCDH7"/>
</dbReference>
<dbReference type="HPA" id="ENSG00000169851">
    <property type="expression patterns" value="Low tissue specificity"/>
</dbReference>
<dbReference type="MalaCards" id="PCDH7"/>
<dbReference type="MIM" id="602988">
    <property type="type" value="gene"/>
</dbReference>
<dbReference type="neXtProt" id="NX_O60245"/>
<dbReference type="OpenTargets" id="ENSG00000169851"/>
<dbReference type="PharmGKB" id="PA33006"/>
<dbReference type="VEuPathDB" id="HostDB:ENSG00000169851"/>
<dbReference type="eggNOG" id="ENOG502QVM0">
    <property type="taxonomic scope" value="Eukaryota"/>
</dbReference>
<dbReference type="GeneTree" id="ENSGT00940000157221"/>
<dbReference type="InParanoid" id="O60245"/>
<dbReference type="OMA" id="MENDARP"/>
<dbReference type="OrthoDB" id="6252479at2759"/>
<dbReference type="PAN-GO" id="O60245">
    <property type="GO annotations" value="2 GO annotations based on evolutionary models"/>
</dbReference>
<dbReference type="PhylomeDB" id="O60245"/>
<dbReference type="PathwayCommons" id="O60245"/>
<dbReference type="Reactome" id="R-HSA-114608">
    <property type="pathway name" value="Platelet degranulation"/>
</dbReference>
<dbReference type="Reactome" id="R-HSA-8980692">
    <property type="pathway name" value="RHOA GTPase cycle"/>
</dbReference>
<dbReference type="Reactome" id="R-HSA-9013026">
    <property type="pathway name" value="RHOB GTPase cycle"/>
</dbReference>
<dbReference type="SignaLink" id="O60245"/>
<dbReference type="BioGRID-ORCS" id="5099">
    <property type="hits" value="11 hits in 1156 CRISPR screens"/>
</dbReference>
<dbReference type="ChiTaRS" id="PCDH7">
    <property type="organism name" value="human"/>
</dbReference>
<dbReference type="EvolutionaryTrace" id="O60245"/>
<dbReference type="GeneWiki" id="PCDH7"/>
<dbReference type="GenomeRNAi" id="5099"/>
<dbReference type="Pharos" id="O60245">
    <property type="development level" value="Tbio"/>
</dbReference>
<dbReference type="PRO" id="PR:O60245"/>
<dbReference type="Proteomes" id="UP000005640">
    <property type="component" value="Chromosome 4"/>
</dbReference>
<dbReference type="RNAct" id="O60245">
    <property type="molecule type" value="protein"/>
</dbReference>
<dbReference type="Bgee" id="ENSG00000169851">
    <property type="expression patterns" value="Expressed in endothelial cell and 190 other cell types or tissues"/>
</dbReference>
<dbReference type="ExpressionAtlas" id="O60245">
    <property type="expression patterns" value="baseline and differential"/>
</dbReference>
<dbReference type="GO" id="GO:0005886">
    <property type="term" value="C:plasma membrane"/>
    <property type="evidence" value="ECO:0000314"/>
    <property type="project" value="HPA"/>
</dbReference>
<dbReference type="GO" id="GO:0031092">
    <property type="term" value="C:platelet alpha granule membrane"/>
    <property type="evidence" value="ECO:0000304"/>
    <property type="project" value="Reactome"/>
</dbReference>
<dbReference type="GO" id="GO:0005509">
    <property type="term" value="F:calcium ion binding"/>
    <property type="evidence" value="ECO:0007669"/>
    <property type="project" value="InterPro"/>
</dbReference>
<dbReference type="GO" id="GO:0007155">
    <property type="term" value="P:cell adhesion"/>
    <property type="evidence" value="ECO:0000318"/>
    <property type="project" value="GO_Central"/>
</dbReference>
<dbReference type="GO" id="GO:0007156">
    <property type="term" value="P:homophilic cell adhesion via plasma membrane adhesion molecules"/>
    <property type="evidence" value="ECO:0007669"/>
    <property type="project" value="InterPro"/>
</dbReference>
<dbReference type="CDD" id="cd11304">
    <property type="entry name" value="Cadherin_repeat"/>
    <property type="match status" value="7"/>
</dbReference>
<dbReference type="FunFam" id="2.60.40.60:FF:000028">
    <property type="entry name" value="Protocadherin 1"/>
    <property type="match status" value="1"/>
</dbReference>
<dbReference type="FunFam" id="2.60.40.60:FF:000034">
    <property type="entry name" value="Protocadherin 1"/>
    <property type="match status" value="1"/>
</dbReference>
<dbReference type="FunFam" id="2.60.40.60:FF:000043">
    <property type="entry name" value="Protocadherin 1"/>
    <property type="match status" value="1"/>
</dbReference>
<dbReference type="FunFam" id="2.60.40.60:FF:000005">
    <property type="entry name" value="Protocadherin 9"/>
    <property type="match status" value="1"/>
</dbReference>
<dbReference type="FunFam" id="2.60.40.60:FF:000016">
    <property type="entry name" value="Protocadherin 9"/>
    <property type="match status" value="1"/>
</dbReference>
<dbReference type="FunFam" id="2.60.40.60:FF:000073">
    <property type="entry name" value="protocadherin-7 isoform X1"/>
    <property type="match status" value="1"/>
</dbReference>
<dbReference type="FunFam" id="2.60.40.60:FF:000270">
    <property type="entry name" value="protocadherin-7 isoform X3"/>
    <property type="match status" value="1"/>
</dbReference>
<dbReference type="Gene3D" id="2.60.40.60">
    <property type="entry name" value="Cadherins"/>
    <property type="match status" value="7"/>
</dbReference>
<dbReference type="InterPro" id="IPR002126">
    <property type="entry name" value="Cadherin-like_dom"/>
</dbReference>
<dbReference type="InterPro" id="IPR015919">
    <property type="entry name" value="Cadherin-like_sf"/>
</dbReference>
<dbReference type="InterPro" id="IPR020894">
    <property type="entry name" value="Cadherin_CS"/>
</dbReference>
<dbReference type="InterPro" id="IPR013164">
    <property type="entry name" value="Cadherin_N"/>
</dbReference>
<dbReference type="InterPro" id="IPR013585">
    <property type="entry name" value="Protocadherin"/>
</dbReference>
<dbReference type="InterPro" id="IPR050174">
    <property type="entry name" value="Protocadherin/Cadherin-CA"/>
</dbReference>
<dbReference type="PANTHER" id="PTHR24028">
    <property type="entry name" value="CADHERIN-87A"/>
    <property type="match status" value="1"/>
</dbReference>
<dbReference type="PANTHER" id="PTHR24028:SF253">
    <property type="entry name" value="PROTOCADHERIN-7"/>
    <property type="match status" value="1"/>
</dbReference>
<dbReference type="Pfam" id="PF00028">
    <property type="entry name" value="Cadherin"/>
    <property type="match status" value="6"/>
</dbReference>
<dbReference type="Pfam" id="PF08266">
    <property type="entry name" value="Cadherin_2"/>
    <property type="match status" value="1"/>
</dbReference>
<dbReference type="Pfam" id="PF08374">
    <property type="entry name" value="Protocadherin"/>
    <property type="match status" value="1"/>
</dbReference>
<dbReference type="PRINTS" id="PR00205">
    <property type="entry name" value="CADHERIN"/>
</dbReference>
<dbReference type="SMART" id="SM00112">
    <property type="entry name" value="CA"/>
    <property type="match status" value="7"/>
</dbReference>
<dbReference type="SUPFAM" id="SSF49313">
    <property type="entry name" value="Cadherin-like"/>
    <property type="match status" value="7"/>
</dbReference>
<dbReference type="PROSITE" id="PS00232">
    <property type="entry name" value="CADHERIN_1"/>
    <property type="match status" value="6"/>
</dbReference>
<dbReference type="PROSITE" id="PS50268">
    <property type="entry name" value="CADHERIN_2"/>
    <property type="match status" value="7"/>
</dbReference>
<keyword id="KW-0002">3D-structure</keyword>
<keyword id="KW-0025">Alternative splicing</keyword>
<keyword id="KW-0106">Calcium</keyword>
<keyword id="KW-0130">Cell adhesion</keyword>
<keyword id="KW-1003">Cell membrane</keyword>
<keyword id="KW-0325">Glycoprotein</keyword>
<keyword id="KW-0472">Membrane</keyword>
<keyword id="KW-0597">Phosphoprotein</keyword>
<keyword id="KW-1267">Proteomics identification</keyword>
<keyword id="KW-1185">Reference proteome</keyword>
<keyword id="KW-0677">Repeat</keyword>
<keyword id="KW-0732">Signal</keyword>
<keyword id="KW-0812">Transmembrane</keyword>
<keyword id="KW-1133">Transmembrane helix</keyword>
<protein>
    <recommendedName>
        <fullName>Protocadherin-7</fullName>
    </recommendedName>
    <alternativeName>
        <fullName>Brain-heart protocadherin</fullName>
        <shortName>BH-Pcdh</shortName>
    </alternativeName>
</protein>